<sequence>MPRRRVAAKREILDDPKYGSQILAKFMNHVMESGKKAVAERIVYGALDTVKARKNSDPLEIFEKALDAIAPLVEVKSRRVGGATYQVPVEVRPSRRNALAMRWLVDYARKRGEKSMALRLAGELLDAAEGKGAAVKKREDVHRMAEANKAFSHYRF</sequence>
<name>RS7_PSEPW</name>
<keyword id="KW-0687">Ribonucleoprotein</keyword>
<keyword id="KW-0689">Ribosomal protein</keyword>
<keyword id="KW-0694">RNA-binding</keyword>
<keyword id="KW-0699">rRNA-binding</keyword>
<keyword id="KW-0820">tRNA-binding</keyword>
<dbReference type="EMBL" id="CP000949">
    <property type="protein sequence ID" value="ACA75229.1"/>
    <property type="molecule type" value="Genomic_DNA"/>
</dbReference>
<dbReference type="SMR" id="B1JDW8"/>
<dbReference type="STRING" id="390235.PputW619_4753"/>
<dbReference type="KEGG" id="ppw:PputW619_4753"/>
<dbReference type="eggNOG" id="COG0049">
    <property type="taxonomic scope" value="Bacteria"/>
</dbReference>
<dbReference type="HOGENOM" id="CLU_072226_1_1_6"/>
<dbReference type="OrthoDB" id="9807653at2"/>
<dbReference type="GO" id="GO:0015935">
    <property type="term" value="C:small ribosomal subunit"/>
    <property type="evidence" value="ECO:0007669"/>
    <property type="project" value="InterPro"/>
</dbReference>
<dbReference type="GO" id="GO:0019843">
    <property type="term" value="F:rRNA binding"/>
    <property type="evidence" value="ECO:0007669"/>
    <property type="project" value="UniProtKB-UniRule"/>
</dbReference>
<dbReference type="GO" id="GO:0003735">
    <property type="term" value="F:structural constituent of ribosome"/>
    <property type="evidence" value="ECO:0007669"/>
    <property type="project" value="InterPro"/>
</dbReference>
<dbReference type="GO" id="GO:0000049">
    <property type="term" value="F:tRNA binding"/>
    <property type="evidence" value="ECO:0007669"/>
    <property type="project" value="UniProtKB-UniRule"/>
</dbReference>
<dbReference type="GO" id="GO:0006412">
    <property type="term" value="P:translation"/>
    <property type="evidence" value="ECO:0007669"/>
    <property type="project" value="UniProtKB-UniRule"/>
</dbReference>
<dbReference type="CDD" id="cd14869">
    <property type="entry name" value="uS7_Bacteria"/>
    <property type="match status" value="1"/>
</dbReference>
<dbReference type="FunFam" id="1.10.455.10:FF:000001">
    <property type="entry name" value="30S ribosomal protein S7"/>
    <property type="match status" value="1"/>
</dbReference>
<dbReference type="Gene3D" id="1.10.455.10">
    <property type="entry name" value="Ribosomal protein S7 domain"/>
    <property type="match status" value="1"/>
</dbReference>
<dbReference type="HAMAP" id="MF_00480_B">
    <property type="entry name" value="Ribosomal_uS7_B"/>
    <property type="match status" value="1"/>
</dbReference>
<dbReference type="InterPro" id="IPR000235">
    <property type="entry name" value="Ribosomal_uS7"/>
</dbReference>
<dbReference type="InterPro" id="IPR005717">
    <property type="entry name" value="Ribosomal_uS7_bac/org-type"/>
</dbReference>
<dbReference type="InterPro" id="IPR020606">
    <property type="entry name" value="Ribosomal_uS7_CS"/>
</dbReference>
<dbReference type="InterPro" id="IPR023798">
    <property type="entry name" value="Ribosomal_uS7_dom"/>
</dbReference>
<dbReference type="InterPro" id="IPR036823">
    <property type="entry name" value="Ribosomal_uS7_dom_sf"/>
</dbReference>
<dbReference type="NCBIfam" id="TIGR01029">
    <property type="entry name" value="rpsG_bact"/>
    <property type="match status" value="1"/>
</dbReference>
<dbReference type="PANTHER" id="PTHR11205">
    <property type="entry name" value="RIBOSOMAL PROTEIN S7"/>
    <property type="match status" value="1"/>
</dbReference>
<dbReference type="Pfam" id="PF00177">
    <property type="entry name" value="Ribosomal_S7"/>
    <property type="match status" value="1"/>
</dbReference>
<dbReference type="PIRSF" id="PIRSF002122">
    <property type="entry name" value="RPS7p_RPS7a_RPS5e_RPS7o"/>
    <property type="match status" value="1"/>
</dbReference>
<dbReference type="SUPFAM" id="SSF47973">
    <property type="entry name" value="Ribosomal protein S7"/>
    <property type="match status" value="1"/>
</dbReference>
<dbReference type="PROSITE" id="PS00052">
    <property type="entry name" value="RIBOSOMAL_S7"/>
    <property type="match status" value="1"/>
</dbReference>
<gene>
    <name evidence="1" type="primary">rpsG</name>
    <name type="ordered locus">PputW619_4753</name>
</gene>
<proteinExistence type="inferred from homology"/>
<protein>
    <recommendedName>
        <fullName evidence="1">Small ribosomal subunit protein uS7</fullName>
    </recommendedName>
    <alternativeName>
        <fullName evidence="2">30S ribosomal protein S7</fullName>
    </alternativeName>
</protein>
<comment type="function">
    <text evidence="1">One of the primary rRNA binding proteins, it binds directly to 16S rRNA where it nucleates assembly of the head domain of the 30S subunit. Is located at the subunit interface close to the decoding center, probably blocks exit of the E-site tRNA.</text>
</comment>
<comment type="subunit">
    <text evidence="1">Part of the 30S ribosomal subunit. Contacts proteins S9 and S11.</text>
</comment>
<comment type="similarity">
    <text evidence="1">Belongs to the universal ribosomal protein uS7 family.</text>
</comment>
<organism>
    <name type="scientific">Pseudomonas putida (strain W619)</name>
    <dbReference type="NCBI Taxonomy" id="390235"/>
    <lineage>
        <taxon>Bacteria</taxon>
        <taxon>Pseudomonadati</taxon>
        <taxon>Pseudomonadota</taxon>
        <taxon>Gammaproteobacteria</taxon>
        <taxon>Pseudomonadales</taxon>
        <taxon>Pseudomonadaceae</taxon>
        <taxon>Pseudomonas</taxon>
    </lineage>
</organism>
<evidence type="ECO:0000255" key="1">
    <source>
        <dbReference type="HAMAP-Rule" id="MF_00480"/>
    </source>
</evidence>
<evidence type="ECO:0000305" key="2"/>
<reference key="1">
    <citation type="submission" date="2008-02" db="EMBL/GenBank/DDBJ databases">
        <title>Complete sequence of Pseudomonas putida W619.</title>
        <authorList>
            <person name="Copeland A."/>
            <person name="Lucas S."/>
            <person name="Lapidus A."/>
            <person name="Barry K."/>
            <person name="Detter J.C."/>
            <person name="Glavina del Rio T."/>
            <person name="Dalin E."/>
            <person name="Tice H."/>
            <person name="Pitluck S."/>
            <person name="Chain P."/>
            <person name="Malfatti S."/>
            <person name="Shin M."/>
            <person name="Vergez L."/>
            <person name="Schmutz J."/>
            <person name="Larimer F."/>
            <person name="Land M."/>
            <person name="Hauser L."/>
            <person name="Kyrpides N."/>
            <person name="Kim E."/>
            <person name="Taghavi S."/>
            <person name="Vangronsveld D."/>
            <person name="van der Lelie D."/>
            <person name="Richardson P."/>
        </authorList>
    </citation>
    <scope>NUCLEOTIDE SEQUENCE [LARGE SCALE GENOMIC DNA]</scope>
    <source>
        <strain>W619</strain>
    </source>
</reference>
<feature type="chain" id="PRO_1000125987" description="Small ribosomal subunit protein uS7">
    <location>
        <begin position="1"/>
        <end position="156"/>
    </location>
</feature>
<accession>B1JDW8</accession>